<protein>
    <recommendedName>
        <fullName evidence="4">Toxin Bcg III 28.78</fullName>
        <shortName evidence="4">Toxin Bcg 28.78</shortName>
    </recommendedName>
</protein>
<feature type="chain" id="PRO_0000392957" description="Toxin Bcg III 28.78">
    <location>
        <begin position="1"/>
        <end position="37" status="greater than"/>
    </location>
</feature>
<feature type="disulfide bond" evidence="1">
    <location>
        <begin position="4"/>
        <end status="unknown"/>
    </location>
</feature>
<feature type="disulfide bond" evidence="1">
    <location>
        <begin position="6"/>
        <end position="31"/>
    </location>
</feature>
<feature type="disulfide bond" evidence="1">
    <location>
        <begin position="21"/>
        <end status="unknown"/>
    </location>
</feature>
<feature type="non-terminal residue">
    <location>
        <position position="37"/>
    </location>
</feature>
<evidence type="ECO:0000250" key="1">
    <source>
        <dbReference type="UniProtKB" id="P61541"/>
    </source>
</evidence>
<evidence type="ECO:0000255" key="2"/>
<evidence type="ECO:0000269" key="3">
    <source>
    </source>
</evidence>
<evidence type="ECO:0000303" key="4">
    <source>
    </source>
</evidence>
<evidence type="ECO:0000305" key="5"/>
<organism>
    <name type="scientific">Bunodosoma cangicum</name>
    <name type="common">Sea anemone</name>
    <dbReference type="NCBI Taxonomy" id="138296"/>
    <lineage>
        <taxon>Eukaryota</taxon>
        <taxon>Metazoa</taxon>
        <taxon>Cnidaria</taxon>
        <taxon>Anthozoa</taxon>
        <taxon>Hexacorallia</taxon>
        <taxon>Actiniaria</taxon>
        <taxon>Actiniidae</taxon>
        <taxon>Bunodosoma</taxon>
    </lineage>
</organism>
<reference key="1">
    <citation type="journal article" date="2008" name="Comp. Biochem. Physiol.">
        <title>Proteomics of the neurotoxic fraction from the sea anemone Bunodosoma cangicum venom: novel peptides belonging to new classes of toxins.</title>
        <authorList>
            <person name="Zaharenko A.J."/>
            <person name="Ferreira W.A. Jr."/>
            <person name="Oliveira J.S."/>
            <person name="Richardson M."/>
            <person name="Pimenta D.C."/>
            <person name="Konno K."/>
            <person name="Portaro F.C."/>
            <person name="de Freitas J.C."/>
        </authorList>
    </citation>
    <scope>PROTEIN SEQUENCE</scope>
    <scope>MASS SPECTROMETRY</scope>
</reference>
<keyword id="KW-0903">Direct protein sequencing</keyword>
<keyword id="KW-1015">Disulfide bond</keyword>
<keyword id="KW-0872">Ion channel impairing toxin</keyword>
<keyword id="KW-0166">Nematocyst</keyword>
<keyword id="KW-0964">Secreted</keyword>
<keyword id="KW-0800">Toxin</keyword>
<dbReference type="SMR" id="P86462"/>
<dbReference type="GO" id="GO:0005576">
    <property type="term" value="C:extracellular region"/>
    <property type="evidence" value="ECO:0007669"/>
    <property type="project" value="UniProtKB-SubCell"/>
</dbReference>
<dbReference type="GO" id="GO:0042151">
    <property type="term" value="C:nematocyst"/>
    <property type="evidence" value="ECO:0007669"/>
    <property type="project" value="UniProtKB-SubCell"/>
</dbReference>
<dbReference type="GO" id="GO:0008200">
    <property type="term" value="F:ion channel inhibitor activity"/>
    <property type="evidence" value="ECO:0007669"/>
    <property type="project" value="InterPro"/>
</dbReference>
<dbReference type="GO" id="GO:0090729">
    <property type="term" value="F:toxin activity"/>
    <property type="evidence" value="ECO:0007669"/>
    <property type="project" value="UniProtKB-KW"/>
</dbReference>
<dbReference type="Gene3D" id="2.20.20.10">
    <property type="entry name" value="Anthopleurin-A"/>
    <property type="match status" value="1"/>
</dbReference>
<dbReference type="InterPro" id="IPR012414">
    <property type="entry name" value="BDS_K_chnl_tox"/>
</dbReference>
<dbReference type="InterPro" id="IPR023355">
    <property type="entry name" value="Myo_ane_neurotoxin_sf"/>
</dbReference>
<dbReference type="Pfam" id="PF07936">
    <property type="entry name" value="Defensin_4"/>
    <property type="match status" value="1"/>
</dbReference>
<sequence>GVPCKCGSKKGVYWFGQITGCPGGHGYKGSCNYLLGK</sequence>
<accession>P86462</accession>
<name>BDS78_BUNCN</name>
<comment type="subcellular location">
    <subcellularLocation>
        <location evidence="5">Secreted</location>
    </subcellularLocation>
    <subcellularLocation>
        <location evidence="5">Nematocyst</location>
    </subcellularLocation>
</comment>
<comment type="mass spectrometry"/>
<comment type="similarity">
    <text evidence="2">Belongs to the sea anemone type 3 (BDS) potassium channel toxin family.</text>
</comment>
<proteinExistence type="evidence at protein level"/>